<dbReference type="EC" id="2.1.1.191" evidence="1"/>
<dbReference type="EMBL" id="BA000037">
    <property type="protein sequence ID" value="BAC94311.1"/>
    <property type="molecule type" value="Genomic_DNA"/>
</dbReference>
<dbReference type="RefSeq" id="WP_011150172.1">
    <property type="nucleotide sequence ID" value="NC_005139.1"/>
</dbReference>
<dbReference type="SMR" id="Q7ML80"/>
<dbReference type="STRING" id="672.VV93_v1c14530"/>
<dbReference type="KEGG" id="vvy:VV1548"/>
<dbReference type="PATRIC" id="fig|196600.6.peg.1530"/>
<dbReference type="eggNOG" id="COG1092">
    <property type="taxonomic scope" value="Bacteria"/>
</dbReference>
<dbReference type="HOGENOM" id="CLU_014042_0_0_6"/>
<dbReference type="Proteomes" id="UP000002675">
    <property type="component" value="Chromosome I"/>
</dbReference>
<dbReference type="GO" id="GO:0005737">
    <property type="term" value="C:cytoplasm"/>
    <property type="evidence" value="ECO:0007669"/>
    <property type="project" value="UniProtKB-SubCell"/>
</dbReference>
<dbReference type="GO" id="GO:0003723">
    <property type="term" value="F:RNA binding"/>
    <property type="evidence" value="ECO:0007669"/>
    <property type="project" value="UniProtKB-KW"/>
</dbReference>
<dbReference type="GO" id="GO:0016434">
    <property type="term" value="F:rRNA (cytosine) methyltransferase activity"/>
    <property type="evidence" value="ECO:0007669"/>
    <property type="project" value="UniProtKB-UniRule"/>
</dbReference>
<dbReference type="CDD" id="cd02440">
    <property type="entry name" value="AdoMet_MTases"/>
    <property type="match status" value="1"/>
</dbReference>
<dbReference type="CDD" id="cd21153">
    <property type="entry name" value="PUA_RlmI"/>
    <property type="match status" value="1"/>
</dbReference>
<dbReference type="CDD" id="cd11572">
    <property type="entry name" value="RlmI_M_like"/>
    <property type="match status" value="1"/>
</dbReference>
<dbReference type="Gene3D" id="2.30.130.10">
    <property type="entry name" value="PUA domain"/>
    <property type="match status" value="1"/>
</dbReference>
<dbReference type="Gene3D" id="3.30.750.80">
    <property type="entry name" value="RNA methyltransferase domain (HRMD) like"/>
    <property type="match status" value="1"/>
</dbReference>
<dbReference type="Gene3D" id="3.40.50.150">
    <property type="entry name" value="Vaccinia Virus protein VP39"/>
    <property type="match status" value="1"/>
</dbReference>
<dbReference type="HAMAP" id="MF_01857">
    <property type="entry name" value="23SrRNA_methyltr_I"/>
    <property type="match status" value="1"/>
</dbReference>
<dbReference type="InterPro" id="IPR002478">
    <property type="entry name" value="PUA"/>
</dbReference>
<dbReference type="InterPro" id="IPR015947">
    <property type="entry name" value="PUA-like_sf"/>
</dbReference>
<dbReference type="InterPro" id="IPR036974">
    <property type="entry name" value="PUA_sf"/>
</dbReference>
<dbReference type="InterPro" id="IPR023542">
    <property type="entry name" value="RLMI"/>
</dbReference>
<dbReference type="InterPro" id="IPR041532">
    <property type="entry name" value="RlmI-like_PUA"/>
</dbReference>
<dbReference type="InterPro" id="IPR019614">
    <property type="entry name" value="SAM-dep_methyl-trfase"/>
</dbReference>
<dbReference type="InterPro" id="IPR029063">
    <property type="entry name" value="SAM-dependent_MTases_sf"/>
</dbReference>
<dbReference type="PANTHER" id="PTHR42873">
    <property type="entry name" value="RIBOSOMAL RNA LARGE SUBUNIT METHYLTRANSFERASE"/>
    <property type="match status" value="1"/>
</dbReference>
<dbReference type="PANTHER" id="PTHR42873:SF1">
    <property type="entry name" value="S-ADENOSYLMETHIONINE-DEPENDENT METHYLTRANSFERASE DOMAIN-CONTAINING PROTEIN"/>
    <property type="match status" value="1"/>
</dbReference>
<dbReference type="Pfam" id="PF10672">
    <property type="entry name" value="Methyltrans_SAM"/>
    <property type="match status" value="1"/>
</dbReference>
<dbReference type="Pfam" id="PF17785">
    <property type="entry name" value="PUA_3"/>
    <property type="match status" value="1"/>
</dbReference>
<dbReference type="SMART" id="SM00359">
    <property type="entry name" value="PUA"/>
    <property type="match status" value="1"/>
</dbReference>
<dbReference type="SUPFAM" id="SSF88697">
    <property type="entry name" value="PUA domain-like"/>
    <property type="match status" value="1"/>
</dbReference>
<dbReference type="SUPFAM" id="SSF53335">
    <property type="entry name" value="S-adenosyl-L-methionine-dependent methyltransferases"/>
    <property type="match status" value="1"/>
</dbReference>
<dbReference type="PROSITE" id="PS50890">
    <property type="entry name" value="PUA"/>
    <property type="match status" value="1"/>
</dbReference>
<gene>
    <name evidence="1" type="primary">rlmI</name>
    <name type="ordered locus">VV1548</name>
</gene>
<proteinExistence type="inferred from homology"/>
<organism>
    <name type="scientific">Vibrio vulnificus (strain YJ016)</name>
    <dbReference type="NCBI Taxonomy" id="196600"/>
    <lineage>
        <taxon>Bacteria</taxon>
        <taxon>Pseudomonadati</taxon>
        <taxon>Pseudomonadota</taxon>
        <taxon>Gammaproteobacteria</taxon>
        <taxon>Vibrionales</taxon>
        <taxon>Vibrionaceae</taxon>
        <taxon>Vibrio</taxon>
    </lineage>
</organism>
<sequence length="397" mass="44470">MSAAIYLVKGREKSVVRRHPWIFSRGIDRVEGNPQLGETVDVYGHDGKWLAKAAYSPESQIRARVWSFEKQDVNRAFFVKRIQDAQLLREDVIERDGLTGYRLIAAESDGMPGVTIDRYQNFFVCQLLSAGAEHQKQNIVDALIEVFPDCNVYERSDVSVRKKEGLQETTGVLHGEMPPKSVVIEENGVKISVDIVGGHKTGFYLDQRDSRQQAMKYVKDKEVLNCFSYTGGFGLYALKGGAKRVINADVSQPALDTAKFNAELNEFDISKKRAVFLNADVFKLLREYRDQGTKFDVVIMDPPKFAESKAQLNGACRGYKDINMLAMQILKPGGTLLTYSCSGLMDQVLFQKIIADAAVDAGRSVKFVERFEQAADHPTDTAYPEGFYLKGFACKVL</sequence>
<keyword id="KW-0963">Cytoplasm</keyword>
<keyword id="KW-0489">Methyltransferase</keyword>
<keyword id="KW-0694">RNA-binding</keyword>
<keyword id="KW-0698">rRNA processing</keyword>
<keyword id="KW-0949">S-adenosyl-L-methionine</keyword>
<keyword id="KW-0808">Transferase</keyword>
<evidence type="ECO:0000255" key="1">
    <source>
        <dbReference type="HAMAP-Rule" id="MF_01857"/>
    </source>
</evidence>
<protein>
    <recommendedName>
        <fullName evidence="1">Ribosomal RNA large subunit methyltransferase I</fullName>
        <ecNumber evidence="1">2.1.1.191</ecNumber>
    </recommendedName>
    <alternativeName>
        <fullName evidence="1">23S rRNA m5C1962 methyltransferase</fullName>
    </alternativeName>
    <alternativeName>
        <fullName evidence="1">rRNA (cytosine-C(5)-)-methyltransferase RlmI</fullName>
    </alternativeName>
</protein>
<accession>Q7ML80</accession>
<name>RLMI_VIBVY</name>
<comment type="function">
    <text evidence="1">Specifically methylates the cytosine at position 1962 (m5C1962) of 23S rRNA.</text>
</comment>
<comment type="catalytic activity">
    <reaction evidence="1">
        <text>cytidine(1962) in 23S rRNA + S-adenosyl-L-methionine = 5-methylcytidine(1962) in 23S rRNA + S-adenosyl-L-homocysteine + H(+)</text>
        <dbReference type="Rhea" id="RHEA:42912"/>
        <dbReference type="Rhea" id="RHEA-COMP:10382"/>
        <dbReference type="Rhea" id="RHEA-COMP:10386"/>
        <dbReference type="ChEBI" id="CHEBI:15378"/>
        <dbReference type="ChEBI" id="CHEBI:57856"/>
        <dbReference type="ChEBI" id="CHEBI:59789"/>
        <dbReference type="ChEBI" id="CHEBI:74483"/>
        <dbReference type="ChEBI" id="CHEBI:82748"/>
        <dbReference type="EC" id="2.1.1.191"/>
    </reaction>
</comment>
<comment type="subcellular location">
    <subcellularLocation>
        <location evidence="1">Cytoplasm</location>
    </subcellularLocation>
</comment>
<comment type="similarity">
    <text evidence="1">Belongs to the methyltransferase superfamily. RlmI family.</text>
</comment>
<reference key="1">
    <citation type="journal article" date="2003" name="Genome Res.">
        <title>Comparative genome analysis of Vibrio vulnificus, a marine pathogen.</title>
        <authorList>
            <person name="Chen C.-Y."/>
            <person name="Wu K.-M."/>
            <person name="Chang Y.-C."/>
            <person name="Chang C.-H."/>
            <person name="Tsai H.-C."/>
            <person name="Liao T.-L."/>
            <person name="Liu Y.-M."/>
            <person name="Chen H.-J."/>
            <person name="Shen A.B.-T."/>
            <person name="Li J.-C."/>
            <person name="Su T.-L."/>
            <person name="Shao C.-P."/>
            <person name="Lee C.-T."/>
            <person name="Hor L.-I."/>
            <person name="Tsai S.-F."/>
        </authorList>
    </citation>
    <scope>NUCLEOTIDE SEQUENCE [LARGE SCALE GENOMIC DNA]</scope>
    <source>
        <strain>YJ016</strain>
    </source>
</reference>
<feature type="chain" id="PRO_0000366278" description="Ribosomal RNA large subunit methyltransferase I">
    <location>
        <begin position="1"/>
        <end position="397"/>
    </location>
</feature>
<feature type="domain" description="PUA" evidence="1">
    <location>
        <begin position="2"/>
        <end position="80"/>
    </location>
</feature>